<organism>
    <name type="scientific">Maricaulis maris (strain MCS10)</name>
    <name type="common">Caulobacter maris</name>
    <dbReference type="NCBI Taxonomy" id="394221"/>
    <lineage>
        <taxon>Bacteria</taxon>
        <taxon>Pseudomonadati</taxon>
        <taxon>Pseudomonadota</taxon>
        <taxon>Alphaproteobacteria</taxon>
        <taxon>Maricaulales</taxon>
        <taxon>Maricaulaceae</taxon>
        <taxon>Maricaulis</taxon>
    </lineage>
</organism>
<keyword id="KW-0963">Cytoplasm</keyword>
<keyword id="KW-0671">Queuosine biosynthesis</keyword>
<keyword id="KW-1185">Reference proteome</keyword>
<keyword id="KW-0949">S-adenosyl-L-methionine</keyword>
<keyword id="KW-0808">Transferase</keyword>
<comment type="function">
    <text evidence="1">Transfers and isomerizes the ribose moiety from AdoMet to the 7-aminomethyl group of 7-deazaguanine (preQ1-tRNA) to give epoxyqueuosine (oQ-tRNA).</text>
</comment>
<comment type="catalytic activity">
    <reaction evidence="1">
        <text>7-aminomethyl-7-carbaguanosine(34) in tRNA + S-adenosyl-L-methionine = epoxyqueuosine(34) in tRNA + adenine + L-methionine + 2 H(+)</text>
        <dbReference type="Rhea" id="RHEA:32155"/>
        <dbReference type="Rhea" id="RHEA-COMP:10342"/>
        <dbReference type="Rhea" id="RHEA-COMP:18582"/>
        <dbReference type="ChEBI" id="CHEBI:15378"/>
        <dbReference type="ChEBI" id="CHEBI:16708"/>
        <dbReference type="ChEBI" id="CHEBI:57844"/>
        <dbReference type="ChEBI" id="CHEBI:59789"/>
        <dbReference type="ChEBI" id="CHEBI:82833"/>
        <dbReference type="ChEBI" id="CHEBI:194443"/>
        <dbReference type="EC" id="2.4.99.17"/>
    </reaction>
</comment>
<comment type="pathway">
    <text evidence="1">tRNA modification; tRNA-queuosine biosynthesis.</text>
</comment>
<comment type="subunit">
    <text evidence="1">Monomer.</text>
</comment>
<comment type="subcellular location">
    <subcellularLocation>
        <location evidence="1">Cytoplasm</location>
    </subcellularLocation>
</comment>
<comment type="similarity">
    <text evidence="1">Belongs to the QueA family.</text>
</comment>
<reference key="1">
    <citation type="submission" date="2006-08" db="EMBL/GenBank/DDBJ databases">
        <title>Complete sequence of Maricaulis maris MCS10.</title>
        <authorList>
            <consortium name="US DOE Joint Genome Institute"/>
            <person name="Copeland A."/>
            <person name="Lucas S."/>
            <person name="Lapidus A."/>
            <person name="Barry K."/>
            <person name="Detter J.C."/>
            <person name="Glavina del Rio T."/>
            <person name="Hammon N."/>
            <person name="Israni S."/>
            <person name="Dalin E."/>
            <person name="Tice H."/>
            <person name="Pitluck S."/>
            <person name="Saunders E."/>
            <person name="Brettin T."/>
            <person name="Bruce D."/>
            <person name="Han C."/>
            <person name="Tapia R."/>
            <person name="Gilna P."/>
            <person name="Schmutz J."/>
            <person name="Larimer F."/>
            <person name="Land M."/>
            <person name="Hauser L."/>
            <person name="Kyrpides N."/>
            <person name="Mikhailova N."/>
            <person name="Viollier P."/>
            <person name="Stephens C."/>
            <person name="Richardson P."/>
        </authorList>
    </citation>
    <scope>NUCLEOTIDE SEQUENCE [LARGE SCALE GENOMIC DNA]</scope>
    <source>
        <strain>MCS10</strain>
    </source>
</reference>
<feature type="chain" id="PRO_1000015234" description="S-adenosylmethionine:tRNA ribosyltransferase-isomerase">
    <location>
        <begin position="1"/>
        <end position="353"/>
    </location>
</feature>
<gene>
    <name evidence="1" type="primary">queA</name>
    <name type="ordered locus">Mmar10_1867</name>
</gene>
<sequence length="353" mass="38017">MRVSDFDFHLPEARIALRPARPRDAARMLHVASNGVFADRGVRDLPDLLQPGDLMVFNDTRVIPAALKGIRPARAVGGGGPVEVEVNLHKRIDASAWRAFVRPAKRLRMGDEIAFGETLKAEVTGKSEGGDVRLVFNAAGAALDAAIAVAGEMPLPPYIARKRGVDEKDEADYQTLFATHEGSVAAPTAGLHFTPELMAALEARGVEQTRVTLHVGAGTFLPVKSDDTDDHQMHSEWCTVSAEAADAINAAKAEGRRVIPVGTTALRTIESLASGPGIVRAGSRDTDIFLTPGSDFAITDMLMTNFHLPKSTLFMLVSALSGLDVMQRAYAHAIAAEYRFYSYGDACLLERRT</sequence>
<name>QUEA_MARMM</name>
<dbReference type="EC" id="2.4.99.17" evidence="1"/>
<dbReference type="EMBL" id="CP000449">
    <property type="protein sequence ID" value="ABI66159.1"/>
    <property type="molecule type" value="Genomic_DNA"/>
</dbReference>
<dbReference type="RefSeq" id="WP_011643804.1">
    <property type="nucleotide sequence ID" value="NC_008347.1"/>
</dbReference>
<dbReference type="SMR" id="Q0ANH8"/>
<dbReference type="STRING" id="394221.Mmar10_1867"/>
<dbReference type="KEGG" id="mmr:Mmar10_1867"/>
<dbReference type="eggNOG" id="COG0809">
    <property type="taxonomic scope" value="Bacteria"/>
</dbReference>
<dbReference type="HOGENOM" id="CLU_039110_1_1_5"/>
<dbReference type="OrthoDB" id="9805933at2"/>
<dbReference type="UniPathway" id="UPA00392"/>
<dbReference type="Proteomes" id="UP000001964">
    <property type="component" value="Chromosome"/>
</dbReference>
<dbReference type="GO" id="GO:0005737">
    <property type="term" value="C:cytoplasm"/>
    <property type="evidence" value="ECO:0007669"/>
    <property type="project" value="UniProtKB-SubCell"/>
</dbReference>
<dbReference type="GO" id="GO:0051075">
    <property type="term" value="F:S-adenosylmethionine:tRNA ribosyltransferase-isomerase activity"/>
    <property type="evidence" value="ECO:0007669"/>
    <property type="project" value="UniProtKB-EC"/>
</dbReference>
<dbReference type="GO" id="GO:0008616">
    <property type="term" value="P:queuosine biosynthetic process"/>
    <property type="evidence" value="ECO:0007669"/>
    <property type="project" value="UniProtKB-UniRule"/>
</dbReference>
<dbReference type="GO" id="GO:0002099">
    <property type="term" value="P:tRNA wobble guanine modification"/>
    <property type="evidence" value="ECO:0007669"/>
    <property type="project" value="TreeGrafter"/>
</dbReference>
<dbReference type="Gene3D" id="2.40.10.240">
    <property type="entry name" value="QueA-like"/>
    <property type="match status" value="1"/>
</dbReference>
<dbReference type="Gene3D" id="3.40.1780.10">
    <property type="entry name" value="QueA-like"/>
    <property type="match status" value="1"/>
</dbReference>
<dbReference type="HAMAP" id="MF_00113">
    <property type="entry name" value="QueA"/>
    <property type="match status" value="1"/>
</dbReference>
<dbReference type="InterPro" id="IPR003699">
    <property type="entry name" value="QueA"/>
</dbReference>
<dbReference type="InterPro" id="IPR042118">
    <property type="entry name" value="QueA_dom1"/>
</dbReference>
<dbReference type="InterPro" id="IPR042119">
    <property type="entry name" value="QueA_dom2"/>
</dbReference>
<dbReference type="InterPro" id="IPR036100">
    <property type="entry name" value="QueA_sf"/>
</dbReference>
<dbReference type="NCBIfam" id="NF001140">
    <property type="entry name" value="PRK00147.1"/>
    <property type="match status" value="1"/>
</dbReference>
<dbReference type="NCBIfam" id="TIGR00113">
    <property type="entry name" value="queA"/>
    <property type="match status" value="1"/>
</dbReference>
<dbReference type="PANTHER" id="PTHR30307">
    <property type="entry name" value="S-ADENOSYLMETHIONINE:TRNA RIBOSYLTRANSFERASE-ISOMERASE"/>
    <property type="match status" value="1"/>
</dbReference>
<dbReference type="PANTHER" id="PTHR30307:SF0">
    <property type="entry name" value="S-ADENOSYLMETHIONINE:TRNA RIBOSYLTRANSFERASE-ISOMERASE"/>
    <property type="match status" value="1"/>
</dbReference>
<dbReference type="Pfam" id="PF02547">
    <property type="entry name" value="Queuosine_synth"/>
    <property type="match status" value="1"/>
</dbReference>
<dbReference type="SUPFAM" id="SSF111337">
    <property type="entry name" value="QueA-like"/>
    <property type="match status" value="1"/>
</dbReference>
<proteinExistence type="inferred from homology"/>
<protein>
    <recommendedName>
        <fullName evidence="1">S-adenosylmethionine:tRNA ribosyltransferase-isomerase</fullName>
        <ecNumber evidence="1">2.4.99.17</ecNumber>
    </recommendedName>
    <alternativeName>
        <fullName evidence="1">Queuosine biosynthesis protein QueA</fullName>
    </alternativeName>
</protein>
<evidence type="ECO:0000255" key="1">
    <source>
        <dbReference type="HAMAP-Rule" id="MF_00113"/>
    </source>
</evidence>
<accession>Q0ANH8</accession>